<comment type="function">
    <text evidence="1">Catalyzes the conversion of acetate into acetyl-CoA (AcCoA), an essential intermediate at the junction of anabolic and catabolic pathways. AcsA undergoes a two-step reaction. In the first half reaction, AcsA combines acetate with ATP to form acetyl-adenylate (AcAMP) intermediate. In the second half reaction, it can then transfer the acetyl group from AcAMP to the sulfhydryl group of CoA, forming the product AcCoA.</text>
</comment>
<comment type="catalytic activity">
    <reaction evidence="1">
        <text>acetate + ATP + CoA = acetyl-CoA + AMP + diphosphate</text>
        <dbReference type="Rhea" id="RHEA:23176"/>
        <dbReference type="ChEBI" id="CHEBI:30089"/>
        <dbReference type="ChEBI" id="CHEBI:30616"/>
        <dbReference type="ChEBI" id="CHEBI:33019"/>
        <dbReference type="ChEBI" id="CHEBI:57287"/>
        <dbReference type="ChEBI" id="CHEBI:57288"/>
        <dbReference type="ChEBI" id="CHEBI:456215"/>
        <dbReference type="EC" id="6.2.1.1"/>
    </reaction>
</comment>
<comment type="cofactor">
    <cofactor evidence="1">
        <name>Mg(2+)</name>
        <dbReference type="ChEBI" id="CHEBI:18420"/>
    </cofactor>
</comment>
<comment type="PTM">
    <text evidence="1">Acetylated. Deacetylation by the SIR2-homolog deacetylase activates the enzyme.</text>
</comment>
<comment type="similarity">
    <text evidence="1">Belongs to the ATP-dependent AMP-binding enzyme family.</text>
</comment>
<dbReference type="EC" id="6.2.1.1" evidence="1"/>
<dbReference type="EMBL" id="BX571966">
    <property type="protein sequence ID" value="CAH37823.1"/>
    <property type="molecule type" value="Genomic_DNA"/>
</dbReference>
<dbReference type="RefSeq" id="YP_110395.1">
    <property type="nucleotide sequence ID" value="NC_006351.1"/>
</dbReference>
<dbReference type="SMR" id="Q63NC4"/>
<dbReference type="STRING" id="272560.BPSS0375"/>
<dbReference type="KEGG" id="bps:BPSS0375"/>
<dbReference type="PATRIC" id="fig|272560.51.peg.6501"/>
<dbReference type="eggNOG" id="COG0365">
    <property type="taxonomic scope" value="Bacteria"/>
</dbReference>
<dbReference type="Proteomes" id="UP000000605">
    <property type="component" value="Chromosome 2"/>
</dbReference>
<dbReference type="GO" id="GO:0005829">
    <property type="term" value="C:cytosol"/>
    <property type="evidence" value="ECO:0007669"/>
    <property type="project" value="TreeGrafter"/>
</dbReference>
<dbReference type="GO" id="GO:0003987">
    <property type="term" value="F:acetate-CoA ligase activity"/>
    <property type="evidence" value="ECO:0007669"/>
    <property type="project" value="UniProtKB-UniRule"/>
</dbReference>
<dbReference type="GO" id="GO:0016208">
    <property type="term" value="F:AMP binding"/>
    <property type="evidence" value="ECO:0007669"/>
    <property type="project" value="InterPro"/>
</dbReference>
<dbReference type="GO" id="GO:0005524">
    <property type="term" value="F:ATP binding"/>
    <property type="evidence" value="ECO:0007669"/>
    <property type="project" value="UniProtKB-KW"/>
</dbReference>
<dbReference type="GO" id="GO:0046872">
    <property type="term" value="F:metal ion binding"/>
    <property type="evidence" value="ECO:0007669"/>
    <property type="project" value="UniProtKB-KW"/>
</dbReference>
<dbReference type="GO" id="GO:0019427">
    <property type="term" value="P:acetyl-CoA biosynthetic process from acetate"/>
    <property type="evidence" value="ECO:0007669"/>
    <property type="project" value="InterPro"/>
</dbReference>
<dbReference type="CDD" id="cd05966">
    <property type="entry name" value="ACS"/>
    <property type="match status" value="1"/>
</dbReference>
<dbReference type="FunFam" id="3.40.50.12780:FF:000001">
    <property type="entry name" value="Acetyl-coenzyme A synthetase"/>
    <property type="match status" value="1"/>
</dbReference>
<dbReference type="Gene3D" id="3.30.300.30">
    <property type="match status" value="1"/>
</dbReference>
<dbReference type="Gene3D" id="3.40.50.12780">
    <property type="entry name" value="N-terminal domain of ligase-like"/>
    <property type="match status" value="1"/>
</dbReference>
<dbReference type="HAMAP" id="MF_01123">
    <property type="entry name" value="Ac_CoA_synth"/>
    <property type="match status" value="1"/>
</dbReference>
<dbReference type="InterPro" id="IPR011904">
    <property type="entry name" value="Ac_CoA_lig"/>
</dbReference>
<dbReference type="InterPro" id="IPR032387">
    <property type="entry name" value="ACAS_N"/>
</dbReference>
<dbReference type="InterPro" id="IPR025110">
    <property type="entry name" value="AMP-bd_C"/>
</dbReference>
<dbReference type="InterPro" id="IPR045851">
    <property type="entry name" value="AMP-bd_C_sf"/>
</dbReference>
<dbReference type="InterPro" id="IPR020845">
    <property type="entry name" value="AMP-binding_CS"/>
</dbReference>
<dbReference type="InterPro" id="IPR000873">
    <property type="entry name" value="AMP-dep_synth/lig_dom"/>
</dbReference>
<dbReference type="InterPro" id="IPR042099">
    <property type="entry name" value="ANL_N_sf"/>
</dbReference>
<dbReference type="NCBIfam" id="TIGR02188">
    <property type="entry name" value="Ac_CoA_lig_AcsA"/>
    <property type="match status" value="1"/>
</dbReference>
<dbReference type="NCBIfam" id="NF001208">
    <property type="entry name" value="PRK00174.1"/>
    <property type="match status" value="1"/>
</dbReference>
<dbReference type="PANTHER" id="PTHR24095">
    <property type="entry name" value="ACETYL-COENZYME A SYNTHETASE"/>
    <property type="match status" value="1"/>
</dbReference>
<dbReference type="PANTHER" id="PTHR24095:SF14">
    <property type="entry name" value="ACETYL-COENZYME A SYNTHETASE 1"/>
    <property type="match status" value="1"/>
</dbReference>
<dbReference type="Pfam" id="PF16177">
    <property type="entry name" value="ACAS_N"/>
    <property type="match status" value="1"/>
</dbReference>
<dbReference type="Pfam" id="PF00501">
    <property type="entry name" value="AMP-binding"/>
    <property type="match status" value="1"/>
</dbReference>
<dbReference type="Pfam" id="PF13193">
    <property type="entry name" value="AMP-binding_C"/>
    <property type="match status" value="1"/>
</dbReference>
<dbReference type="SUPFAM" id="SSF56801">
    <property type="entry name" value="Acetyl-CoA synthetase-like"/>
    <property type="match status" value="1"/>
</dbReference>
<dbReference type="PROSITE" id="PS00455">
    <property type="entry name" value="AMP_BINDING"/>
    <property type="match status" value="1"/>
</dbReference>
<gene>
    <name evidence="1" type="primary">acsA</name>
    <name type="ordered locus">BPSS0375</name>
</gene>
<proteinExistence type="inferred from homology"/>
<feature type="chain" id="PRO_1000065284" description="Acetyl-coenzyme A synthetase">
    <location>
        <begin position="1"/>
        <end position="660"/>
    </location>
</feature>
<feature type="binding site" evidence="1">
    <location>
        <begin position="197"/>
        <end position="200"/>
    </location>
    <ligand>
        <name>CoA</name>
        <dbReference type="ChEBI" id="CHEBI:57287"/>
    </ligand>
</feature>
<feature type="binding site" evidence="1">
    <location>
        <position position="317"/>
    </location>
    <ligand>
        <name>CoA</name>
        <dbReference type="ChEBI" id="CHEBI:57287"/>
    </ligand>
</feature>
<feature type="binding site" evidence="1">
    <location>
        <begin position="397"/>
        <end position="399"/>
    </location>
    <ligand>
        <name>ATP</name>
        <dbReference type="ChEBI" id="CHEBI:30616"/>
    </ligand>
</feature>
<feature type="binding site" evidence="1">
    <location>
        <begin position="421"/>
        <end position="426"/>
    </location>
    <ligand>
        <name>ATP</name>
        <dbReference type="ChEBI" id="CHEBI:30616"/>
    </ligand>
</feature>
<feature type="binding site" evidence="1">
    <location>
        <position position="512"/>
    </location>
    <ligand>
        <name>ATP</name>
        <dbReference type="ChEBI" id="CHEBI:30616"/>
    </ligand>
</feature>
<feature type="binding site" evidence="1">
    <location>
        <position position="528"/>
    </location>
    <ligand>
        <name>ATP</name>
        <dbReference type="ChEBI" id="CHEBI:30616"/>
    </ligand>
</feature>
<feature type="binding site" evidence="1">
    <location>
        <position position="536"/>
    </location>
    <ligand>
        <name>CoA</name>
        <dbReference type="ChEBI" id="CHEBI:57287"/>
    </ligand>
</feature>
<feature type="binding site" evidence="1">
    <location>
        <position position="539"/>
    </location>
    <ligand>
        <name>ATP</name>
        <dbReference type="ChEBI" id="CHEBI:30616"/>
    </ligand>
</feature>
<feature type="binding site" evidence="1">
    <location>
        <position position="550"/>
    </location>
    <ligand>
        <name>Mg(2+)</name>
        <dbReference type="ChEBI" id="CHEBI:18420"/>
    </ligand>
</feature>
<feature type="binding site" evidence="1">
    <location>
        <position position="552"/>
    </location>
    <ligand>
        <name>Mg(2+)</name>
        <dbReference type="ChEBI" id="CHEBI:18420"/>
    </ligand>
</feature>
<feature type="binding site" evidence="1">
    <location>
        <position position="555"/>
    </location>
    <ligand>
        <name>Mg(2+)</name>
        <dbReference type="ChEBI" id="CHEBI:18420"/>
    </ligand>
</feature>
<feature type="modified residue" description="N6-acetyllysine" evidence="1">
    <location>
        <position position="625"/>
    </location>
</feature>
<accession>Q63NC4</accession>
<protein>
    <recommendedName>
        <fullName evidence="1">Acetyl-coenzyme A synthetase</fullName>
        <shortName evidence="1">AcCoA synthetase</shortName>
        <shortName evidence="1">Acs</shortName>
        <ecNumber evidence="1">6.2.1.1</ecNumber>
    </recommendedName>
    <alternativeName>
        <fullName evidence="1">Acetate--CoA ligase</fullName>
    </alternativeName>
    <alternativeName>
        <fullName evidence="1">Acyl-activating enzyme</fullName>
    </alternativeName>
</protein>
<keyword id="KW-0007">Acetylation</keyword>
<keyword id="KW-0067">ATP-binding</keyword>
<keyword id="KW-0436">Ligase</keyword>
<keyword id="KW-0460">Magnesium</keyword>
<keyword id="KW-0479">Metal-binding</keyword>
<keyword id="KW-0547">Nucleotide-binding</keyword>
<keyword id="KW-1185">Reference proteome</keyword>
<sequence>MSAIESVLHERRQFAPPAAVEKAAAISGMAAYRALAEEAERDYEGFWARLARETLEWRKPFGKVLDETNAPFYKWFEDGELNASYNCLDRHVAAGLGERVAVIFEADDGTVTRVTYADLLARVSRFANALKKRGVGRGDRVVIYIPMSVEGIVAMQACARIGATHSVVFGGFSSKSLHERIVDVGATALVTADEQMRGGKTLPLKSIADEALAMGGCDAVKTVVVYRRTGGNVDWHAGRDVWMHEMVANESDACEPEWVGAEHPLFILYTSGSTGKPKGVQHSTAGYLLWVAQTMKWTFDWKPDDVFWCTADIGWVTGHSYITYGPLAVGATQVVFEGVPTYPNAGRFWKMIGDHKVTVFYTAPTAIRSLIKAAEADDRVHPRSYDLSSLRIIGTVGEPINPEAWIWYHKNVGQARCPIVDTWWQTETGGHMITPLPGATPTVPGSCTLPLPGIMAAVVDETGQDVPNGQGGILVVKRPWPAMARTIWGDPERFKKSYFPEELGGRLYLAGDGTVRDKETGYFTIMGRIDDVLNVSGHRLGTMEIESALVSHELVAEAAVVGRPDDTTGEAVVAFVVLKRSRPEGEEAAALAKTLRDWVGKEIGPIAKPKDIRFGDNLPKTRSGKIMRRLLRSLAKGEAITQDTSTLENPAILEQLAEVR</sequence>
<organism>
    <name type="scientific">Burkholderia pseudomallei (strain K96243)</name>
    <dbReference type="NCBI Taxonomy" id="272560"/>
    <lineage>
        <taxon>Bacteria</taxon>
        <taxon>Pseudomonadati</taxon>
        <taxon>Pseudomonadota</taxon>
        <taxon>Betaproteobacteria</taxon>
        <taxon>Burkholderiales</taxon>
        <taxon>Burkholderiaceae</taxon>
        <taxon>Burkholderia</taxon>
        <taxon>pseudomallei group</taxon>
    </lineage>
</organism>
<reference key="1">
    <citation type="journal article" date="2004" name="Proc. Natl. Acad. Sci. U.S.A.">
        <title>Genomic plasticity of the causative agent of melioidosis, Burkholderia pseudomallei.</title>
        <authorList>
            <person name="Holden M.T.G."/>
            <person name="Titball R.W."/>
            <person name="Peacock S.J."/>
            <person name="Cerdeno-Tarraga A.-M."/>
            <person name="Atkins T."/>
            <person name="Crossman L.C."/>
            <person name="Pitt T."/>
            <person name="Churcher C."/>
            <person name="Mungall K.L."/>
            <person name="Bentley S.D."/>
            <person name="Sebaihia M."/>
            <person name="Thomson N.R."/>
            <person name="Bason N."/>
            <person name="Beacham I.R."/>
            <person name="Brooks K."/>
            <person name="Brown K.A."/>
            <person name="Brown N.F."/>
            <person name="Challis G.L."/>
            <person name="Cherevach I."/>
            <person name="Chillingworth T."/>
            <person name="Cronin A."/>
            <person name="Crossett B."/>
            <person name="Davis P."/>
            <person name="DeShazer D."/>
            <person name="Feltwell T."/>
            <person name="Fraser A."/>
            <person name="Hance Z."/>
            <person name="Hauser H."/>
            <person name="Holroyd S."/>
            <person name="Jagels K."/>
            <person name="Keith K.E."/>
            <person name="Maddison M."/>
            <person name="Moule S."/>
            <person name="Price C."/>
            <person name="Quail M.A."/>
            <person name="Rabbinowitsch E."/>
            <person name="Rutherford K."/>
            <person name="Sanders M."/>
            <person name="Simmonds M."/>
            <person name="Songsivilai S."/>
            <person name="Stevens K."/>
            <person name="Tumapa S."/>
            <person name="Vesaratchavest M."/>
            <person name="Whitehead S."/>
            <person name="Yeats C."/>
            <person name="Barrell B.G."/>
            <person name="Oyston P.C.F."/>
            <person name="Parkhill J."/>
        </authorList>
    </citation>
    <scope>NUCLEOTIDE SEQUENCE [LARGE SCALE GENOMIC DNA]</scope>
    <source>
        <strain>K96243</strain>
    </source>
</reference>
<name>ACSA_BURPS</name>
<evidence type="ECO:0000255" key="1">
    <source>
        <dbReference type="HAMAP-Rule" id="MF_01123"/>
    </source>
</evidence>